<organism>
    <name type="scientific">Actineria villosa</name>
    <name type="common">Okinawan sea anemone</name>
    <dbReference type="NCBI Taxonomy" id="227975"/>
    <lineage>
        <taxon>Eukaryota</taxon>
        <taxon>Metazoa</taxon>
        <taxon>Cnidaria</taxon>
        <taxon>Anthozoa</taxon>
        <taxon>Hexacorallia</taxon>
        <taxon>Actiniaria</taxon>
        <taxon>Nynantheae</taxon>
        <taxon>Aliciidae</taxon>
        <taxon>Actineria</taxon>
    </lineage>
</organism>
<sequence length="226" mass="25115">MRHFVVFLYMFLALSIPTAFAKKHIVTKKGNHQDITNDNEGENAEKKSAAVAGAVIAGGELALKILTKILDEIGKIDRKIAIGVDNESGLKWTALNTYYKSGASDVTLPYEVENSKALLYTARKSKGPVARGAVGVLAYKMSSGNTLAVMFSVPFDYNLYTNWWNVKIYDGEKKADEKMYNELYNNNNPIKPSIWEKRDLGQDGLKLRGFMTSNGDAKLVIHIEKS</sequence>
<name>ACTP2_ACTVL</name>
<comment type="function">
    <text evidence="4 6">Pore-forming protein that forms cations-selective hydrophilic pores of around 1 nm (By similarity) and causes cytolysis (PubMed:20837039). Pore formation is a multi-step process that involves specific recognition of membrane sphingomyelin (but neither cholesterol nor phosphatidylcholine) using aromatic rich region and adjacent phosphocholine (POC) binding site, firm binding to the membrane (mainly driven by hydrophobic interactions) accompanied by the transfer of the N-terminal region to the lipid-water interface and finally pore formation after oligomerization of monomers (By similarity).</text>
</comment>
<comment type="subunit">
    <text evidence="1">Octamer or nonamer in membranes. Monomer in the soluble state.</text>
</comment>
<comment type="subcellular location">
    <subcellularLocation>
        <location evidence="1">Secreted</location>
    </subcellularLocation>
    <subcellularLocation>
        <location evidence="2">Nematocyst</location>
    </subcellularLocation>
    <subcellularLocation>
        <location evidence="1">Target cell membrane</location>
    </subcellularLocation>
    <text evidence="1">Forms an alpha-helical membrane channel in the prey.</text>
</comment>
<comment type="domain">
    <text evidence="3">Composed of a long N-terminal alpha-helix and a core region rich in beta-sheet structures. Before the pore formation, the alpha-helix binds the lipid membrane, partitions into the lipid-water interface and stabilizes the monomeric molecule on the membrane. Finally, it traverses the bilayer, thus forming the transmembrane pore.</text>
</comment>
<comment type="similarity">
    <text evidence="9">Belongs to the actinoporin family. Sea anemone subfamily.</text>
</comment>
<dbReference type="EMBL" id="AB512460">
    <property type="protein sequence ID" value="BAI70364.1"/>
    <property type="molecule type" value="mRNA"/>
</dbReference>
<dbReference type="EMBL" id="AB512463">
    <property type="protein sequence ID" value="BAI70367.1"/>
    <property type="molecule type" value="Genomic_DNA"/>
</dbReference>
<dbReference type="SMR" id="D2YZQ3"/>
<dbReference type="GO" id="GO:0005576">
    <property type="term" value="C:extracellular region"/>
    <property type="evidence" value="ECO:0007669"/>
    <property type="project" value="UniProtKB-SubCell"/>
</dbReference>
<dbReference type="GO" id="GO:0042151">
    <property type="term" value="C:nematocyst"/>
    <property type="evidence" value="ECO:0007669"/>
    <property type="project" value="UniProtKB-SubCell"/>
</dbReference>
<dbReference type="GO" id="GO:0044218">
    <property type="term" value="C:other organism cell membrane"/>
    <property type="evidence" value="ECO:0007669"/>
    <property type="project" value="UniProtKB-KW"/>
</dbReference>
<dbReference type="GO" id="GO:0046930">
    <property type="term" value="C:pore complex"/>
    <property type="evidence" value="ECO:0007669"/>
    <property type="project" value="InterPro"/>
</dbReference>
<dbReference type="GO" id="GO:0015267">
    <property type="term" value="F:channel activity"/>
    <property type="evidence" value="ECO:0007669"/>
    <property type="project" value="InterPro"/>
</dbReference>
<dbReference type="GO" id="GO:0090729">
    <property type="term" value="F:toxin activity"/>
    <property type="evidence" value="ECO:0007669"/>
    <property type="project" value="UniProtKB-KW"/>
</dbReference>
<dbReference type="GO" id="GO:0051715">
    <property type="term" value="P:cytolysis in another organism"/>
    <property type="evidence" value="ECO:0007669"/>
    <property type="project" value="InterPro"/>
</dbReference>
<dbReference type="GO" id="GO:0006812">
    <property type="term" value="P:monoatomic cation transport"/>
    <property type="evidence" value="ECO:0007669"/>
    <property type="project" value="InterPro"/>
</dbReference>
<dbReference type="GO" id="GO:0046931">
    <property type="term" value="P:pore complex assembly"/>
    <property type="evidence" value="ECO:0007669"/>
    <property type="project" value="InterPro"/>
</dbReference>
<dbReference type="FunFam" id="2.60.270.20:FF:000001">
    <property type="entry name" value="DELTA-actitoxin-Afr1a"/>
    <property type="match status" value="1"/>
</dbReference>
<dbReference type="Gene3D" id="2.60.270.20">
    <property type="entry name" value="Cytolysin/lectin"/>
    <property type="match status" value="1"/>
</dbReference>
<dbReference type="InterPro" id="IPR050677">
    <property type="entry name" value="Actinoporin_PFT"/>
</dbReference>
<dbReference type="InterPro" id="IPR009104">
    <property type="entry name" value="Anemon_actinoporin-like"/>
</dbReference>
<dbReference type="InterPro" id="IPR015926">
    <property type="entry name" value="Cytolysin/lectin"/>
</dbReference>
<dbReference type="PANTHER" id="PTHR40388">
    <property type="entry name" value="BRYOPORIN"/>
    <property type="match status" value="1"/>
</dbReference>
<dbReference type="PANTHER" id="PTHR40388:SF1">
    <property type="entry name" value="BRYOPORIN"/>
    <property type="match status" value="1"/>
</dbReference>
<dbReference type="Pfam" id="PF06369">
    <property type="entry name" value="Anemone_cytotox"/>
    <property type="match status" value="1"/>
</dbReference>
<dbReference type="SUPFAM" id="SSF63724">
    <property type="entry name" value="Cytolysin/lectin"/>
    <property type="match status" value="1"/>
</dbReference>
<feature type="signal peptide" evidence="5">
    <location>
        <begin position="1"/>
        <end position="21"/>
    </location>
</feature>
<feature type="propeptide" id="PRO_0000395611" evidence="4">
    <location>
        <begin position="22"/>
        <end position="45"/>
    </location>
</feature>
<feature type="chain" id="PRO_0000395612" description="DELTA-thalatoxin-Avl1b">
    <location>
        <begin position="48"/>
        <end position="226"/>
    </location>
</feature>
<feature type="region of interest" description="Plays an important role in the hemolytic activity" evidence="2">
    <location>
        <begin position="50"/>
        <end position="59"/>
    </location>
</feature>
<feature type="region of interest" description="N-terminal region" evidence="3">
    <location>
        <begin position="58"/>
        <end position="77"/>
    </location>
</feature>
<feature type="region of interest" description="Trp-rich region, which is important for the binding to lipid membrane" evidence="3">
    <location>
        <begin position="152"/>
        <end position="167"/>
    </location>
</feature>
<feature type="short sequence motif" description="Cell attachment site, crucial for protein stability" evidence="2 5">
    <location>
        <begin position="191"/>
        <end position="193"/>
    </location>
</feature>
<feature type="binding site" evidence="2">
    <location>
        <position position="101"/>
    </location>
    <ligand>
        <name>phosphocholine</name>
        <dbReference type="ChEBI" id="CHEBI:295975"/>
    </ligand>
</feature>
<feature type="binding site" evidence="2">
    <location>
        <position position="134"/>
    </location>
    <ligand>
        <name>phosphocholine</name>
        <dbReference type="ChEBI" id="CHEBI:295975"/>
    </ligand>
</feature>
<feature type="binding site" evidence="2">
    <location>
        <position position="152"/>
    </location>
    <ligand>
        <name>phosphocholine</name>
        <dbReference type="ChEBI" id="CHEBI:295975"/>
    </ligand>
</feature>
<feature type="binding site" evidence="2">
    <location>
        <position position="154"/>
    </location>
    <ligand>
        <name>phosphocholine</name>
        <dbReference type="ChEBI" id="CHEBI:295975"/>
    </ligand>
</feature>
<feature type="binding site" evidence="2">
    <location>
        <position position="180"/>
    </location>
    <ligand>
        <name>phosphocholine</name>
        <dbReference type="ChEBI" id="CHEBI:295975"/>
    </ligand>
</feature>
<feature type="binding site" evidence="2">
    <location>
        <position position="184"/>
    </location>
    <ligand>
        <name>phosphocholine</name>
        <dbReference type="ChEBI" id="CHEBI:295975"/>
    </ligand>
</feature>
<feature type="site" description="Important in the initial contact with the lipid membrane" evidence="3">
    <location>
        <position position="160"/>
    </location>
</feature>
<feature type="sequence conflict" description="In Ref. 1; BAI70367." evidence="9" ref="1">
    <original>N</original>
    <variation>T</variation>
    <location>
        <position position="31"/>
    </location>
</feature>
<feature type="sequence conflict" description="In Ref. 1; BAI70367." evidence="9" ref="1">
    <original>A</original>
    <variation>T</variation>
    <location>
        <position position="52"/>
    </location>
</feature>
<proteinExistence type="evidence at transcript level"/>
<evidence type="ECO:0000250" key="1">
    <source>
        <dbReference type="UniProtKB" id="B9W5G6"/>
    </source>
</evidence>
<evidence type="ECO:0000250" key="2">
    <source>
        <dbReference type="UniProtKB" id="P07845"/>
    </source>
</evidence>
<evidence type="ECO:0000250" key="3">
    <source>
        <dbReference type="UniProtKB" id="P61914"/>
    </source>
</evidence>
<evidence type="ECO:0000250" key="4">
    <source>
        <dbReference type="UniProtKB" id="Q5R231"/>
    </source>
</evidence>
<evidence type="ECO:0000255" key="5"/>
<evidence type="ECO:0000269" key="6">
    <source>
    </source>
</evidence>
<evidence type="ECO:0000303" key="7">
    <source>
    </source>
</evidence>
<evidence type="ECO:0000303" key="8">
    <source>
    </source>
</evidence>
<evidence type="ECO:0000305" key="9"/>
<reference key="1">
    <citation type="journal article" date="2010" name="Toxicon">
        <title>Molecular characterization on the genome structure of hemolysin toxin isoforms isolated from sea anemone Actineria villosa and Phyllodiscus semoni.</title>
        <authorList>
            <person name="Uechi G."/>
            <person name="Toma H."/>
            <person name="Arakawa T."/>
            <person name="Sato Y."/>
        </authorList>
    </citation>
    <scope>NUCLEOTIDE SEQUENCE [GENOMIC DNA / MRNA]</scope>
    <scope>FUNCTION</scope>
    <source>
        <tissue>Tentacle</tissue>
    </source>
</reference>
<reference key="2">
    <citation type="journal article" date="2011" name="Toxicon">
        <authorList>
            <person name="Uechi G."/>
            <person name="Toma H."/>
            <person name="Arakawa T."/>
            <person name="Sato Y."/>
        </authorList>
    </citation>
    <scope>ERRATUM OF PUBMED:20837039</scope>
</reference>
<reference key="3">
    <citation type="journal article" date="2012" name="Toxicon">
        <title>Development of a rational nomenclature for naming peptide and protein toxins from sea anemones.</title>
        <authorList>
            <person name="Oliveira J.S."/>
            <person name="Fuentes-Silva D."/>
            <person name="King G.F."/>
        </authorList>
    </citation>
    <scope>NOMENCLATURE</scope>
</reference>
<keyword id="KW-0165">Cleavage on pair of basic residues</keyword>
<keyword id="KW-0204">Cytolysis</keyword>
<keyword id="KW-0406">Ion transport</keyword>
<keyword id="KW-0472">Membrane</keyword>
<keyword id="KW-0166">Nematocyst</keyword>
<keyword id="KW-0964">Secreted</keyword>
<keyword id="KW-0732">Signal</keyword>
<keyword id="KW-1052">Target cell membrane</keyword>
<keyword id="KW-1053">Target membrane</keyword>
<keyword id="KW-0800">Toxin</keyword>
<keyword id="KW-0812">Transmembrane</keyword>
<keyword id="KW-0813">Transport</keyword>
<protein>
    <recommendedName>
        <fullName evidence="8">DELTA-thalatoxin-Avl1b</fullName>
        <shortName evidence="8">DELTA-TATX-Avl1b</shortName>
    </recommendedName>
    <alternativeName>
        <fullName evidence="7">Cytolysin Avt-II</fullName>
    </alternativeName>
    <alternativeName>
        <fullName evidence="9">Hemolytic toxin Avt-2</fullName>
    </alternativeName>
</protein>
<accession>D2YZQ3</accession>
<accession>D2YZQ6</accession>